<evidence type="ECO:0000255" key="1">
    <source>
        <dbReference type="HAMAP-Rule" id="MF_01445"/>
    </source>
</evidence>
<sequence>MPPEQGPVVLGIETSCDETGVGLVRNGTLLGEALSTSMDQHARYGGVVPEIAARAHVQALVPCVRAALSSAGLFVADIGAVAVTAGPGLATALHVGVAAAKAYATALDVPLYGVHHLAGHLAADLVDGEPLPDPLIALIVSGGHTSLLRVGDLARDPITHLGDTLDDAAGECFDKVARVLGLPYPGGPAVDRAAVGHDATALAFPRPLTGRADAPYTFSFSGLKTAVARWVESHPDSPVPAGDVIASFQEAVVDVLTAKAVRACLDHGIGDLLIVGGVAANSRLRALAASRCEQTGIRLRIPARRRCTDNGVMIAALGDLLVRAGAEPSPAELTAMPGAFLERAQLGTALPALHAA</sequence>
<reference key="1">
    <citation type="journal article" date="2007" name="Genome Res.">
        <title>Genome characteristics of facultatively symbiotic Frankia sp. strains reflect host range and host plant biogeography.</title>
        <authorList>
            <person name="Normand P."/>
            <person name="Lapierre P."/>
            <person name="Tisa L.S."/>
            <person name="Gogarten J.P."/>
            <person name="Alloisio N."/>
            <person name="Bagnarol E."/>
            <person name="Bassi C.A."/>
            <person name="Berry A.M."/>
            <person name="Bickhart D.M."/>
            <person name="Choisne N."/>
            <person name="Couloux A."/>
            <person name="Cournoyer B."/>
            <person name="Cruveiller S."/>
            <person name="Daubin V."/>
            <person name="Demange N."/>
            <person name="Francino M.P."/>
            <person name="Goltsman E."/>
            <person name="Huang Y."/>
            <person name="Kopp O.R."/>
            <person name="Labarre L."/>
            <person name="Lapidus A."/>
            <person name="Lavire C."/>
            <person name="Marechal J."/>
            <person name="Martinez M."/>
            <person name="Mastronunzio J.E."/>
            <person name="Mullin B.C."/>
            <person name="Niemann J."/>
            <person name="Pujic P."/>
            <person name="Rawnsley T."/>
            <person name="Rouy Z."/>
            <person name="Schenowitz C."/>
            <person name="Sellstedt A."/>
            <person name="Tavares F."/>
            <person name="Tomkins J.P."/>
            <person name="Vallenet D."/>
            <person name="Valverde C."/>
            <person name="Wall L.G."/>
            <person name="Wang Y."/>
            <person name="Medigue C."/>
            <person name="Benson D.R."/>
        </authorList>
    </citation>
    <scope>NUCLEOTIDE SEQUENCE [LARGE SCALE GENOMIC DNA]</scope>
    <source>
        <strain>DSM 45818 / CECT 9043 / HFP020203 / CcI3</strain>
    </source>
</reference>
<dbReference type="EC" id="2.3.1.234" evidence="1"/>
<dbReference type="EMBL" id="CP000249">
    <property type="protein sequence ID" value="ABD12024.1"/>
    <property type="molecule type" value="Genomic_DNA"/>
</dbReference>
<dbReference type="RefSeq" id="WP_011437059.1">
    <property type="nucleotide sequence ID" value="NZ_MSEA01000276.1"/>
</dbReference>
<dbReference type="SMR" id="Q2J9L8"/>
<dbReference type="STRING" id="106370.Francci3_2662"/>
<dbReference type="KEGG" id="fra:Francci3_2662"/>
<dbReference type="eggNOG" id="COG0533">
    <property type="taxonomic scope" value="Bacteria"/>
</dbReference>
<dbReference type="HOGENOM" id="CLU_023208_0_2_11"/>
<dbReference type="OrthoDB" id="9806197at2"/>
<dbReference type="PhylomeDB" id="Q2J9L8"/>
<dbReference type="Proteomes" id="UP000001937">
    <property type="component" value="Chromosome"/>
</dbReference>
<dbReference type="GO" id="GO:0005737">
    <property type="term" value="C:cytoplasm"/>
    <property type="evidence" value="ECO:0007669"/>
    <property type="project" value="UniProtKB-SubCell"/>
</dbReference>
<dbReference type="GO" id="GO:0005506">
    <property type="term" value="F:iron ion binding"/>
    <property type="evidence" value="ECO:0007669"/>
    <property type="project" value="UniProtKB-UniRule"/>
</dbReference>
<dbReference type="GO" id="GO:0061711">
    <property type="term" value="F:N(6)-L-threonylcarbamoyladenine synthase activity"/>
    <property type="evidence" value="ECO:0007669"/>
    <property type="project" value="UniProtKB-EC"/>
</dbReference>
<dbReference type="GO" id="GO:0002949">
    <property type="term" value="P:tRNA threonylcarbamoyladenosine modification"/>
    <property type="evidence" value="ECO:0007669"/>
    <property type="project" value="UniProtKB-UniRule"/>
</dbReference>
<dbReference type="FunFam" id="3.30.420.40:FF:000012">
    <property type="entry name" value="tRNA N6-adenosine threonylcarbamoyltransferase"/>
    <property type="match status" value="1"/>
</dbReference>
<dbReference type="FunFam" id="3.30.420.40:FF:000040">
    <property type="entry name" value="tRNA N6-adenosine threonylcarbamoyltransferase"/>
    <property type="match status" value="1"/>
</dbReference>
<dbReference type="Gene3D" id="3.30.420.40">
    <property type="match status" value="2"/>
</dbReference>
<dbReference type="HAMAP" id="MF_01445">
    <property type="entry name" value="TsaD"/>
    <property type="match status" value="1"/>
</dbReference>
<dbReference type="InterPro" id="IPR043129">
    <property type="entry name" value="ATPase_NBD"/>
</dbReference>
<dbReference type="InterPro" id="IPR000905">
    <property type="entry name" value="Gcp-like_dom"/>
</dbReference>
<dbReference type="InterPro" id="IPR017861">
    <property type="entry name" value="KAE1/TsaD"/>
</dbReference>
<dbReference type="InterPro" id="IPR017860">
    <property type="entry name" value="Peptidase_M22_CS"/>
</dbReference>
<dbReference type="InterPro" id="IPR022450">
    <property type="entry name" value="TsaD"/>
</dbReference>
<dbReference type="NCBIfam" id="TIGR00329">
    <property type="entry name" value="gcp_kae1"/>
    <property type="match status" value="1"/>
</dbReference>
<dbReference type="NCBIfam" id="TIGR03723">
    <property type="entry name" value="T6A_TsaD_YgjD"/>
    <property type="match status" value="1"/>
</dbReference>
<dbReference type="PANTHER" id="PTHR11735">
    <property type="entry name" value="TRNA N6-ADENOSINE THREONYLCARBAMOYLTRANSFERASE"/>
    <property type="match status" value="1"/>
</dbReference>
<dbReference type="PANTHER" id="PTHR11735:SF6">
    <property type="entry name" value="TRNA N6-ADENOSINE THREONYLCARBAMOYLTRANSFERASE, MITOCHONDRIAL"/>
    <property type="match status" value="1"/>
</dbReference>
<dbReference type="Pfam" id="PF00814">
    <property type="entry name" value="TsaD"/>
    <property type="match status" value="1"/>
</dbReference>
<dbReference type="PRINTS" id="PR00789">
    <property type="entry name" value="OSIALOPTASE"/>
</dbReference>
<dbReference type="SUPFAM" id="SSF53067">
    <property type="entry name" value="Actin-like ATPase domain"/>
    <property type="match status" value="1"/>
</dbReference>
<dbReference type="PROSITE" id="PS01016">
    <property type="entry name" value="GLYCOPROTEASE"/>
    <property type="match status" value="1"/>
</dbReference>
<organism>
    <name type="scientific">Frankia casuarinae (strain DSM 45818 / CECT 9043 / HFP020203 / CcI3)</name>
    <dbReference type="NCBI Taxonomy" id="106370"/>
    <lineage>
        <taxon>Bacteria</taxon>
        <taxon>Bacillati</taxon>
        <taxon>Actinomycetota</taxon>
        <taxon>Actinomycetes</taxon>
        <taxon>Frankiales</taxon>
        <taxon>Frankiaceae</taxon>
        <taxon>Frankia</taxon>
    </lineage>
</organism>
<comment type="function">
    <text evidence="1">Required for the formation of a threonylcarbamoyl group on adenosine at position 37 (t(6)A37) in tRNAs that read codons beginning with adenine. Is involved in the transfer of the threonylcarbamoyl moiety of threonylcarbamoyl-AMP (TC-AMP) to the N6 group of A37, together with TsaE and TsaB. TsaD likely plays a direct catalytic role in this reaction.</text>
</comment>
<comment type="catalytic activity">
    <reaction evidence="1">
        <text>L-threonylcarbamoyladenylate + adenosine(37) in tRNA = N(6)-L-threonylcarbamoyladenosine(37) in tRNA + AMP + H(+)</text>
        <dbReference type="Rhea" id="RHEA:37059"/>
        <dbReference type="Rhea" id="RHEA-COMP:10162"/>
        <dbReference type="Rhea" id="RHEA-COMP:10163"/>
        <dbReference type="ChEBI" id="CHEBI:15378"/>
        <dbReference type="ChEBI" id="CHEBI:73682"/>
        <dbReference type="ChEBI" id="CHEBI:74411"/>
        <dbReference type="ChEBI" id="CHEBI:74418"/>
        <dbReference type="ChEBI" id="CHEBI:456215"/>
        <dbReference type="EC" id="2.3.1.234"/>
    </reaction>
</comment>
<comment type="cofactor">
    <cofactor evidence="1">
        <name>Fe(2+)</name>
        <dbReference type="ChEBI" id="CHEBI:29033"/>
    </cofactor>
    <text evidence="1">Binds 1 Fe(2+) ion per subunit.</text>
</comment>
<comment type="subcellular location">
    <subcellularLocation>
        <location evidence="1">Cytoplasm</location>
    </subcellularLocation>
</comment>
<comment type="similarity">
    <text evidence="1">Belongs to the KAE1 / TsaD family.</text>
</comment>
<accession>Q2J9L8</accession>
<protein>
    <recommendedName>
        <fullName evidence="1">tRNA N6-adenosine threonylcarbamoyltransferase</fullName>
        <ecNumber evidence="1">2.3.1.234</ecNumber>
    </recommendedName>
    <alternativeName>
        <fullName evidence="1">N6-L-threonylcarbamoyladenine synthase</fullName>
        <shortName evidence="1">t(6)A synthase</shortName>
    </alternativeName>
    <alternativeName>
        <fullName evidence="1">t(6)A37 threonylcarbamoyladenosine biosynthesis protein TsaD</fullName>
    </alternativeName>
    <alternativeName>
        <fullName evidence="1">tRNA threonylcarbamoyladenosine biosynthesis protein TsaD</fullName>
    </alternativeName>
</protein>
<keyword id="KW-0012">Acyltransferase</keyword>
<keyword id="KW-0963">Cytoplasm</keyword>
<keyword id="KW-0408">Iron</keyword>
<keyword id="KW-0479">Metal-binding</keyword>
<keyword id="KW-1185">Reference proteome</keyword>
<keyword id="KW-0808">Transferase</keyword>
<keyword id="KW-0819">tRNA processing</keyword>
<gene>
    <name evidence="1" type="primary">tsaD</name>
    <name type="synonym">gcp</name>
    <name type="ordered locus">Francci3_2662</name>
</gene>
<proteinExistence type="inferred from homology"/>
<name>TSAD_FRACC</name>
<feature type="chain" id="PRO_0000303370" description="tRNA N6-adenosine threonylcarbamoyltransferase">
    <location>
        <begin position="1"/>
        <end position="356"/>
    </location>
</feature>
<feature type="binding site" evidence="1">
    <location>
        <position position="116"/>
    </location>
    <ligand>
        <name>Fe cation</name>
        <dbReference type="ChEBI" id="CHEBI:24875"/>
    </ligand>
</feature>
<feature type="binding site" evidence="1">
    <location>
        <position position="120"/>
    </location>
    <ligand>
        <name>Fe cation</name>
        <dbReference type="ChEBI" id="CHEBI:24875"/>
    </ligand>
</feature>
<feature type="binding site" evidence="1">
    <location>
        <begin position="139"/>
        <end position="143"/>
    </location>
    <ligand>
        <name>substrate</name>
    </ligand>
</feature>
<feature type="binding site" evidence="1">
    <location>
        <position position="174"/>
    </location>
    <ligand>
        <name>substrate</name>
    </ligand>
</feature>
<feature type="binding site" evidence="1">
    <location>
        <position position="187"/>
    </location>
    <ligand>
        <name>substrate</name>
    </ligand>
</feature>
<feature type="binding site" evidence="1">
    <location>
        <position position="191"/>
    </location>
    <ligand>
        <name>substrate</name>
    </ligand>
</feature>
<feature type="binding site" evidence="1">
    <location>
        <position position="281"/>
    </location>
    <ligand>
        <name>substrate</name>
    </ligand>
</feature>
<feature type="binding site" evidence="1">
    <location>
        <position position="309"/>
    </location>
    <ligand>
        <name>Fe cation</name>
        <dbReference type="ChEBI" id="CHEBI:24875"/>
    </ligand>
</feature>